<sequence length="502" mass="54584">MAIKAEEISALLRSQIENYESEMSVTDVGTVLQIGDGIALIHGLNDVMAGELVEFHNGVLGLAQNLEESNVGVVILGPYTGITEGDEVKRTGRIMEVPVGEELIGRVVNPLGQPIDGQGPINTTKTRPVEKKATGVMDRKSVDEPLQTGIKAIDALVPIGRGQRELIIGDRQTGKTTIAIDTILNQKDQGTICIYVAIGQKDSTVRANVEKLRQAGALDYTIVVAASASEPSPLLYIAPYSGVTMGEEFMFNGKHVLIVYDDLTKQAAAYRELSLLLRRPPGREAYPGDVFYLHSRLLERAAKLNDDLGGGSITALPIIETQAGDISAYVPTNVISITDGQIFLQSDLFFSGVRPAINAGQSVSRVGGSAQIKAMKKVAGTLRLDLASYRELESFAQFGSDLDEFTASKLERGKRTVEVLKQDQNKPLPVEHQVLIIYALTKGYLDDIPVVDITRFEDELNHWAESNATELLNEIRETGGLPDAEKFDTAINEFKKSFSKSE</sequence>
<comment type="function">
    <text evidence="1">Produces ATP from ADP in the presence of a proton gradient across the membrane. The alpha chain is a regulatory subunit.</text>
</comment>
<comment type="catalytic activity">
    <reaction evidence="1">
        <text>ATP + H2O + 4 H(+)(in) = ADP + phosphate + 5 H(+)(out)</text>
        <dbReference type="Rhea" id="RHEA:57720"/>
        <dbReference type="ChEBI" id="CHEBI:15377"/>
        <dbReference type="ChEBI" id="CHEBI:15378"/>
        <dbReference type="ChEBI" id="CHEBI:30616"/>
        <dbReference type="ChEBI" id="CHEBI:43474"/>
        <dbReference type="ChEBI" id="CHEBI:456216"/>
        <dbReference type="EC" id="7.1.2.2"/>
    </reaction>
</comment>
<comment type="subunit">
    <text evidence="1">F-type ATPases have 2 components, CF(1) - the catalytic core - and CF(0) - the membrane proton channel. CF(1) has five subunits: alpha(3), beta(3), gamma(1), delta(1), epsilon(1). CF(0) has three main subunits: a(1), b(2) and c(9-12). The alpha and beta chains form an alternating ring which encloses part of the gamma chain. CF(1) is attached to CF(0) by a central stalk formed by the gamma and epsilon chains, while a peripheral stalk is formed by the delta and b chains.</text>
</comment>
<comment type="subcellular location">
    <subcellularLocation>
        <location evidence="1">Cell membrane</location>
        <topology evidence="1">Peripheral membrane protein</topology>
    </subcellularLocation>
</comment>
<comment type="similarity">
    <text evidence="1">Belongs to the ATPase alpha/beta chains family.</text>
</comment>
<accession>Q6GEX0</accession>
<evidence type="ECO:0000255" key="1">
    <source>
        <dbReference type="HAMAP-Rule" id="MF_01346"/>
    </source>
</evidence>
<protein>
    <recommendedName>
        <fullName evidence="1">ATP synthase subunit alpha</fullName>
        <ecNumber evidence="1">7.1.2.2</ecNumber>
    </recommendedName>
    <alternativeName>
        <fullName evidence="1">ATP synthase F1 sector subunit alpha</fullName>
    </alternativeName>
    <alternativeName>
        <fullName evidence="1">F-ATPase subunit alpha</fullName>
    </alternativeName>
</protein>
<name>ATPA_STAAR</name>
<gene>
    <name evidence="1" type="primary">atpA</name>
    <name type="ordered locus">SAR2193</name>
</gene>
<organism>
    <name type="scientific">Staphylococcus aureus (strain MRSA252)</name>
    <dbReference type="NCBI Taxonomy" id="282458"/>
    <lineage>
        <taxon>Bacteria</taxon>
        <taxon>Bacillati</taxon>
        <taxon>Bacillota</taxon>
        <taxon>Bacilli</taxon>
        <taxon>Bacillales</taxon>
        <taxon>Staphylococcaceae</taxon>
        <taxon>Staphylococcus</taxon>
    </lineage>
</organism>
<feature type="chain" id="PRO_0000144353" description="ATP synthase subunit alpha">
    <location>
        <begin position="1"/>
        <end position="502"/>
    </location>
</feature>
<feature type="binding site" evidence="1">
    <location>
        <begin position="169"/>
        <end position="176"/>
    </location>
    <ligand>
        <name>ATP</name>
        <dbReference type="ChEBI" id="CHEBI:30616"/>
    </ligand>
</feature>
<feature type="site" description="Required for activity" evidence="1">
    <location>
        <position position="362"/>
    </location>
</feature>
<dbReference type="EC" id="7.1.2.2" evidence="1"/>
<dbReference type="EMBL" id="BX571856">
    <property type="protein sequence ID" value="CAG41174.1"/>
    <property type="molecule type" value="Genomic_DNA"/>
</dbReference>
<dbReference type="RefSeq" id="WP_000974881.1">
    <property type="nucleotide sequence ID" value="NC_002952.2"/>
</dbReference>
<dbReference type="SMR" id="Q6GEX0"/>
<dbReference type="KEGG" id="sar:SAR2193"/>
<dbReference type="HOGENOM" id="CLU_010091_2_1_9"/>
<dbReference type="Proteomes" id="UP000000596">
    <property type="component" value="Chromosome"/>
</dbReference>
<dbReference type="GO" id="GO:0005886">
    <property type="term" value="C:plasma membrane"/>
    <property type="evidence" value="ECO:0007669"/>
    <property type="project" value="UniProtKB-SubCell"/>
</dbReference>
<dbReference type="GO" id="GO:0045259">
    <property type="term" value="C:proton-transporting ATP synthase complex"/>
    <property type="evidence" value="ECO:0007669"/>
    <property type="project" value="UniProtKB-KW"/>
</dbReference>
<dbReference type="GO" id="GO:0043531">
    <property type="term" value="F:ADP binding"/>
    <property type="evidence" value="ECO:0007669"/>
    <property type="project" value="TreeGrafter"/>
</dbReference>
<dbReference type="GO" id="GO:0005524">
    <property type="term" value="F:ATP binding"/>
    <property type="evidence" value="ECO:0007669"/>
    <property type="project" value="UniProtKB-UniRule"/>
</dbReference>
<dbReference type="GO" id="GO:0046933">
    <property type="term" value="F:proton-transporting ATP synthase activity, rotational mechanism"/>
    <property type="evidence" value="ECO:0007669"/>
    <property type="project" value="UniProtKB-UniRule"/>
</dbReference>
<dbReference type="CDD" id="cd18113">
    <property type="entry name" value="ATP-synt_F1_alpha_C"/>
    <property type="match status" value="1"/>
</dbReference>
<dbReference type="CDD" id="cd18116">
    <property type="entry name" value="ATP-synt_F1_alpha_N"/>
    <property type="match status" value="1"/>
</dbReference>
<dbReference type="CDD" id="cd01132">
    <property type="entry name" value="F1-ATPase_alpha_CD"/>
    <property type="match status" value="1"/>
</dbReference>
<dbReference type="FunFam" id="1.20.150.20:FF:000001">
    <property type="entry name" value="ATP synthase subunit alpha"/>
    <property type="match status" value="1"/>
</dbReference>
<dbReference type="FunFam" id="2.40.30.20:FF:000001">
    <property type="entry name" value="ATP synthase subunit alpha"/>
    <property type="match status" value="1"/>
</dbReference>
<dbReference type="FunFam" id="3.40.50.300:FF:000002">
    <property type="entry name" value="ATP synthase subunit alpha"/>
    <property type="match status" value="1"/>
</dbReference>
<dbReference type="Gene3D" id="2.40.30.20">
    <property type="match status" value="1"/>
</dbReference>
<dbReference type="Gene3D" id="1.20.150.20">
    <property type="entry name" value="ATP synthase alpha/beta chain, C-terminal domain"/>
    <property type="match status" value="1"/>
</dbReference>
<dbReference type="Gene3D" id="3.40.50.300">
    <property type="entry name" value="P-loop containing nucleotide triphosphate hydrolases"/>
    <property type="match status" value="1"/>
</dbReference>
<dbReference type="HAMAP" id="MF_01346">
    <property type="entry name" value="ATP_synth_alpha_bact"/>
    <property type="match status" value="1"/>
</dbReference>
<dbReference type="InterPro" id="IPR023366">
    <property type="entry name" value="ATP_synth_asu-like_sf"/>
</dbReference>
<dbReference type="InterPro" id="IPR000793">
    <property type="entry name" value="ATP_synth_asu_C"/>
</dbReference>
<dbReference type="InterPro" id="IPR038376">
    <property type="entry name" value="ATP_synth_asu_C_sf"/>
</dbReference>
<dbReference type="InterPro" id="IPR033732">
    <property type="entry name" value="ATP_synth_F1_a_nt-bd_dom"/>
</dbReference>
<dbReference type="InterPro" id="IPR005294">
    <property type="entry name" value="ATP_synth_F1_asu"/>
</dbReference>
<dbReference type="InterPro" id="IPR020003">
    <property type="entry name" value="ATPase_a/bsu_AS"/>
</dbReference>
<dbReference type="InterPro" id="IPR004100">
    <property type="entry name" value="ATPase_F1/V1/A1_a/bsu_N"/>
</dbReference>
<dbReference type="InterPro" id="IPR036121">
    <property type="entry name" value="ATPase_F1/V1/A1_a/bsu_N_sf"/>
</dbReference>
<dbReference type="InterPro" id="IPR000194">
    <property type="entry name" value="ATPase_F1/V1/A1_a/bsu_nucl-bd"/>
</dbReference>
<dbReference type="InterPro" id="IPR027417">
    <property type="entry name" value="P-loop_NTPase"/>
</dbReference>
<dbReference type="NCBIfam" id="TIGR00962">
    <property type="entry name" value="atpA"/>
    <property type="match status" value="1"/>
</dbReference>
<dbReference type="NCBIfam" id="NF009884">
    <property type="entry name" value="PRK13343.1"/>
    <property type="match status" value="1"/>
</dbReference>
<dbReference type="PANTHER" id="PTHR48082">
    <property type="entry name" value="ATP SYNTHASE SUBUNIT ALPHA, MITOCHONDRIAL"/>
    <property type="match status" value="1"/>
</dbReference>
<dbReference type="PANTHER" id="PTHR48082:SF2">
    <property type="entry name" value="ATP SYNTHASE SUBUNIT ALPHA, MITOCHONDRIAL"/>
    <property type="match status" value="1"/>
</dbReference>
<dbReference type="Pfam" id="PF00006">
    <property type="entry name" value="ATP-synt_ab"/>
    <property type="match status" value="1"/>
</dbReference>
<dbReference type="Pfam" id="PF00306">
    <property type="entry name" value="ATP-synt_ab_C"/>
    <property type="match status" value="1"/>
</dbReference>
<dbReference type="Pfam" id="PF02874">
    <property type="entry name" value="ATP-synt_ab_N"/>
    <property type="match status" value="1"/>
</dbReference>
<dbReference type="PIRSF" id="PIRSF039088">
    <property type="entry name" value="F_ATPase_subunit_alpha"/>
    <property type="match status" value="1"/>
</dbReference>
<dbReference type="SUPFAM" id="SSF47917">
    <property type="entry name" value="C-terminal domain of alpha and beta subunits of F1 ATP synthase"/>
    <property type="match status" value="1"/>
</dbReference>
<dbReference type="SUPFAM" id="SSF50615">
    <property type="entry name" value="N-terminal domain of alpha and beta subunits of F1 ATP synthase"/>
    <property type="match status" value="1"/>
</dbReference>
<dbReference type="SUPFAM" id="SSF52540">
    <property type="entry name" value="P-loop containing nucleoside triphosphate hydrolases"/>
    <property type="match status" value="1"/>
</dbReference>
<dbReference type="PROSITE" id="PS00152">
    <property type="entry name" value="ATPASE_ALPHA_BETA"/>
    <property type="match status" value="1"/>
</dbReference>
<proteinExistence type="inferred from homology"/>
<reference key="1">
    <citation type="journal article" date="2004" name="Proc. Natl. Acad. Sci. U.S.A.">
        <title>Complete genomes of two clinical Staphylococcus aureus strains: evidence for the rapid evolution of virulence and drug resistance.</title>
        <authorList>
            <person name="Holden M.T.G."/>
            <person name="Feil E.J."/>
            <person name="Lindsay J.A."/>
            <person name="Peacock S.J."/>
            <person name="Day N.P.J."/>
            <person name="Enright M.C."/>
            <person name="Foster T.J."/>
            <person name="Moore C.E."/>
            <person name="Hurst L."/>
            <person name="Atkin R."/>
            <person name="Barron A."/>
            <person name="Bason N."/>
            <person name="Bentley S.D."/>
            <person name="Chillingworth C."/>
            <person name="Chillingworth T."/>
            <person name="Churcher C."/>
            <person name="Clark L."/>
            <person name="Corton C."/>
            <person name="Cronin A."/>
            <person name="Doggett J."/>
            <person name="Dowd L."/>
            <person name="Feltwell T."/>
            <person name="Hance Z."/>
            <person name="Harris B."/>
            <person name="Hauser H."/>
            <person name="Holroyd S."/>
            <person name="Jagels K."/>
            <person name="James K.D."/>
            <person name="Lennard N."/>
            <person name="Line A."/>
            <person name="Mayes R."/>
            <person name="Moule S."/>
            <person name="Mungall K."/>
            <person name="Ormond D."/>
            <person name="Quail M.A."/>
            <person name="Rabbinowitsch E."/>
            <person name="Rutherford K.M."/>
            <person name="Sanders M."/>
            <person name="Sharp S."/>
            <person name="Simmonds M."/>
            <person name="Stevens K."/>
            <person name="Whitehead S."/>
            <person name="Barrell B.G."/>
            <person name="Spratt B.G."/>
            <person name="Parkhill J."/>
        </authorList>
    </citation>
    <scope>NUCLEOTIDE SEQUENCE [LARGE SCALE GENOMIC DNA]</scope>
    <source>
        <strain>MRSA252</strain>
    </source>
</reference>
<keyword id="KW-0066">ATP synthesis</keyword>
<keyword id="KW-0067">ATP-binding</keyword>
<keyword id="KW-1003">Cell membrane</keyword>
<keyword id="KW-0139">CF(1)</keyword>
<keyword id="KW-0375">Hydrogen ion transport</keyword>
<keyword id="KW-0406">Ion transport</keyword>
<keyword id="KW-0472">Membrane</keyword>
<keyword id="KW-0547">Nucleotide-binding</keyword>
<keyword id="KW-1278">Translocase</keyword>
<keyword id="KW-0813">Transport</keyword>